<comment type="function">
    <text evidence="1">Small subunit of the glutamine-dependent carbamoyl phosphate synthetase (CPSase). CPSase catalyzes the formation of carbamoyl phosphate from the ammonia moiety of glutamine, carbonate, and phosphate donated by ATP, constituting the first step of 2 biosynthetic pathways, one leading to arginine and/or urea and the other to pyrimidine nucleotides. The small subunit (glutamine amidotransferase) binds and cleaves glutamine to supply the large subunit with the substrate ammonia.</text>
</comment>
<comment type="catalytic activity">
    <reaction evidence="1">
        <text>hydrogencarbonate + L-glutamine + 2 ATP + H2O = carbamoyl phosphate + L-glutamate + 2 ADP + phosphate + 2 H(+)</text>
        <dbReference type="Rhea" id="RHEA:18633"/>
        <dbReference type="ChEBI" id="CHEBI:15377"/>
        <dbReference type="ChEBI" id="CHEBI:15378"/>
        <dbReference type="ChEBI" id="CHEBI:17544"/>
        <dbReference type="ChEBI" id="CHEBI:29985"/>
        <dbReference type="ChEBI" id="CHEBI:30616"/>
        <dbReference type="ChEBI" id="CHEBI:43474"/>
        <dbReference type="ChEBI" id="CHEBI:58228"/>
        <dbReference type="ChEBI" id="CHEBI:58359"/>
        <dbReference type="ChEBI" id="CHEBI:456216"/>
        <dbReference type="EC" id="6.3.5.5"/>
    </reaction>
</comment>
<comment type="catalytic activity">
    <molecule>Carbamoyl phosphate synthase small chain</molecule>
    <reaction evidence="1">
        <text>L-glutamine + H2O = L-glutamate + NH4(+)</text>
        <dbReference type="Rhea" id="RHEA:15889"/>
        <dbReference type="ChEBI" id="CHEBI:15377"/>
        <dbReference type="ChEBI" id="CHEBI:28938"/>
        <dbReference type="ChEBI" id="CHEBI:29985"/>
        <dbReference type="ChEBI" id="CHEBI:58359"/>
    </reaction>
</comment>
<comment type="pathway">
    <text evidence="1">Amino-acid biosynthesis; L-arginine biosynthesis; carbamoyl phosphate from bicarbonate: step 1/1.</text>
</comment>
<comment type="pathway">
    <text evidence="1">Pyrimidine metabolism; UMP biosynthesis via de novo pathway; (S)-dihydroorotate from bicarbonate: step 1/3.</text>
</comment>
<comment type="subunit">
    <text evidence="1">Composed of two chains; the small (or glutamine) chain promotes the hydrolysis of glutamine to ammonia, which is used by the large (or ammonia) chain to synthesize carbamoyl phosphate. Tetramer of heterodimers (alpha,beta)4.</text>
</comment>
<comment type="similarity">
    <text evidence="1">Belongs to the CarA family.</text>
</comment>
<dbReference type="EC" id="6.3.5.5" evidence="1"/>
<dbReference type="EMBL" id="AE005176">
    <property type="protein sequence ID" value="AAK05699.1"/>
    <property type="molecule type" value="Genomic_DNA"/>
</dbReference>
<dbReference type="PIR" id="A86825">
    <property type="entry name" value="A86825"/>
</dbReference>
<dbReference type="RefSeq" id="NP_267757.1">
    <property type="nucleotide sequence ID" value="NC_002662.1"/>
</dbReference>
<dbReference type="RefSeq" id="WP_010906052.1">
    <property type="nucleotide sequence ID" value="NC_002662.1"/>
</dbReference>
<dbReference type="SMR" id="Q9CF80"/>
<dbReference type="PaxDb" id="272623-L43866"/>
<dbReference type="EnsemblBacteria" id="AAK05699">
    <property type="protein sequence ID" value="AAK05699"/>
    <property type="gene ID" value="L43866"/>
</dbReference>
<dbReference type="KEGG" id="lla:L43866"/>
<dbReference type="PATRIC" id="fig|272623.7.peg.1722"/>
<dbReference type="eggNOG" id="COG0505">
    <property type="taxonomic scope" value="Bacteria"/>
</dbReference>
<dbReference type="HOGENOM" id="CLU_035901_2_1_9"/>
<dbReference type="OrthoDB" id="9804328at2"/>
<dbReference type="UniPathway" id="UPA00068">
    <property type="reaction ID" value="UER00171"/>
</dbReference>
<dbReference type="UniPathway" id="UPA00070">
    <property type="reaction ID" value="UER00115"/>
</dbReference>
<dbReference type="Proteomes" id="UP000002196">
    <property type="component" value="Chromosome"/>
</dbReference>
<dbReference type="GO" id="GO:0005524">
    <property type="term" value="F:ATP binding"/>
    <property type="evidence" value="ECO:0007669"/>
    <property type="project" value="UniProtKB-UniRule"/>
</dbReference>
<dbReference type="GO" id="GO:0004088">
    <property type="term" value="F:carbamoyl-phosphate synthase (glutamine-hydrolyzing) activity"/>
    <property type="evidence" value="ECO:0007669"/>
    <property type="project" value="UniProtKB-UniRule"/>
</dbReference>
<dbReference type="GO" id="GO:0004359">
    <property type="term" value="F:glutaminase activity"/>
    <property type="evidence" value="ECO:0007669"/>
    <property type="project" value="RHEA"/>
</dbReference>
<dbReference type="GO" id="GO:0006207">
    <property type="term" value="P:'de novo' pyrimidine nucleobase biosynthetic process"/>
    <property type="evidence" value="ECO:0007669"/>
    <property type="project" value="InterPro"/>
</dbReference>
<dbReference type="GO" id="GO:0044205">
    <property type="term" value="P:'de novo' UMP biosynthetic process"/>
    <property type="evidence" value="ECO:0007669"/>
    <property type="project" value="UniProtKB-UniRule"/>
</dbReference>
<dbReference type="GO" id="GO:0006541">
    <property type="term" value="P:glutamine metabolic process"/>
    <property type="evidence" value="ECO:0007669"/>
    <property type="project" value="InterPro"/>
</dbReference>
<dbReference type="GO" id="GO:0006526">
    <property type="term" value="P:L-arginine biosynthetic process"/>
    <property type="evidence" value="ECO:0007669"/>
    <property type="project" value="UniProtKB-UniRule"/>
</dbReference>
<dbReference type="CDD" id="cd01744">
    <property type="entry name" value="GATase1_CPSase"/>
    <property type="match status" value="1"/>
</dbReference>
<dbReference type="FunFam" id="3.40.50.880:FF:000029">
    <property type="entry name" value="Carbamoyl-phosphate synthase small chain"/>
    <property type="match status" value="1"/>
</dbReference>
<dbReference type="FunFam" id="3.50.30.20:FF:000001">
    <property type="entry name" value="Carbamoyl-phosphate synthase small chain"/>
    <property type="match status" value="1"/>
</dbReference>
<dbReference type="Gene3D" id="3.40.50.880">
    <property type="match status" value="1"/>
</dbReference>
<dbReference type="Gene3D" id="3.50.30.20">
    <property type="entry name" value="Carbamoyl-phosphate synthase small subunit, N-terminal domain"/>
    <property type="match status" value="1"/>
</dbReference>
<dbReference type="HAMAP" id="MF_01209">
    <property type="entry name" value="CPSase_S_chain"/>
    <property type="match status" value="1"/>
</dbReference>
<dbReference type="InterPro" id="IPR050472">
    <property type="entry name" value="Anth_synth/Amidotransfase"/>
</dbReference>
<dbReference type="InterPro" id="IPR006274">
    <property type="entry name" value="CarbamoylP_synth_ssu"/>
</dbReference>
<dbReference type="InterPro" id="IPR002474">
    <property type="entry name" value="CarbamoylP_synth_ssu_N"/>
</dbReference>
<dbReference type="InterPro" id="IPR036480">
    <property type="entry name" value="CarbP_synth_ssu_N_sf"/>
</dbReference>
<dbReference type="InterPro" id="IPR029062">
    <property type="entry name" value="Class_I_gatase-like"/>
</dbReference>
<dbReference type="InterPro" id="IPR035686">
    <property type="entry name" value="CPSase_GATase1"/>
</dbReference>
<dbReference type="InterPro" id="IPR017926">
    <property type="entry name" value="GATASE"/>
</dbReference>
<dbReference type="NCBIfam" id="TIGR01368">
    <property type="entry name" value="CPSaseIIsmall"/>
    <property type="match status" value="1"/>
</dbReference>
<dbReference type="NCBIfam" id="NF009475">
    <property type="entry name" value="PRK12838.1"/>
    <property type="match status" value="1"/>
</dbReference>
<dbReference type="PANTHER" id="PTHR43418:SF7">
    <property type="entry name" value="CARBAMOYL-PHOSPHATE SYNTHASE SMALL CHAIN"/>
    <property type="match status" value="1"/>
</dbReference>
<dbReference type="PANTHER" id="PTHR43418">
    <property type="entry name" value="MULTIFUNCTIONAL TRYPTOPHAN BIOSYNTHESIS PROTEIN-RELATED"/>
    <property type="match status" value="1"/>
</dbReference>
<dbReference type="Pfam" id="PF00988">
    <property type="entry name" value="CPSase_sm_chain"/>
    <property type="match status" value="1"/>
</dbReference>
<dbReference type="Pfam" id="PF00117">
    <property type="entry name" value="GATase"/>
    <property type="match status" value="1"/>
</dbReference>
<dbReference type="PRINTS" id="PR00097">
    <property type="entry name" value="ANTSNTHASEII"/>
</dbReference>
<dbReference type="PRINTS" id="PR00099">
    <property type="entry name" value="CPSGATASE"/>
</dbReference>
<dbReference type="PRINTS" id="PR00096">
    <property type="entry name" value="GATASE"/>
</dbReference>
<dbReference type="SMART" id="SM01097">
    <property type="entry name" value="CPSase_sm_chain"/>
    <property type="match status" value="1"/>
</dbReference>
<dbReference type="SUPFAM" id="SSF52021">
    <property type="entry name" value="Carbamoyl phosphate synthetase, small subunit N-terminal domain"/>
    <property type="match status" value="1"/>
</dbReference>
<dbReference type="SUPFAM" id="SSF52317">
    <property type="entry name" value="Class I glutamine amidotransferase-like"/>
    <property type="match status" value="1"/>
</dbReference>
<dbReference type="PROSITE" id="PS51273">
    <property type="entry name" value="GATASE_TYPE_1"/>
    <property type="match status" value="1"/>
</dbReference>
<reference key="1">
    <citation type="journal article" date="2001" name="Genome Res.">
        <title>The complete genome sequence of the lactic acid bacterium Lactococcus lactis ssp. lactis IL1403.</title>
        <authorList>
            <person name="Bolotin A."/>
            <person name="Wincker P."/>
            <person name="Mauger S."/>
            <person name="Jaillon O."/>
            <person name="Malarme K."/>
            <person name="Weissenbach J."/>
            <person name="Ehrlich S.D."/>
            <person name="Sorokin A."/>
        </authorList>
    </citation>
    <scope>NUCLEOTIDE SEQUENCE [LARGE SCALE GENOMIC DNA]</scope>
    <source>
        <strain>IL1403</strain>
    </source>
</reference>
<keyword id="KW-0028">Amino-acid biosynthesis</keyword>
<keyword id="KW-0055">Arginine biosynthesis</keyword>
<keyword id="KW-0067">ATP-binding</keyword>
<keyword id="KW-0315">Glutamine amidotransferase</keyword>
<keyword id="KW-0436">Ligase</keyword>
<keyword id="KW-0547">Nucleotide-binding</keyword>
<keyword id="KW-0665">Pyrimidine biosynthesis</keyword>
<keyword id="KW-1185">Reference proteome</keyword>
<organism>
    <name type="scientific">Lactococcus lactis subsp. lactis (strain IL1403)</name>
    <name type="common">Streptococcus lactis</name>
    <dbReference type="NCBI Taxonomy" id="272623"/>
    <lineage>
        <taxon>Bacteria</taxon>
        <taxon>Bacillati</taxon>
        <taxon>Bacillota</taxon>
        <taxon>Bacilli</taxon>
        <taxon>Lactobacillales</taxon>
        <taxon>Streptococcaceae</taxon>
        <taxon>Lactococcus</taxon>
    </lineage>
</organism>
<accession>Q9CF80</accession>
<protein>
    <recommendedName>
        <fullName evidence="1">Carbamoyl phosphate synthase small chain</fullName>
        <ecNumber evidence="1">6.3.5.5</ecNumber>
    </recommendedName>
    <alternativeName>
        <fullName evidence="1">Carbamoyl phosphate synthetase glutamine chain</fullName>
    </alternativeName>
</protein>
<feature type="chain" id="PRO_0000112284" description="Carbamoyl phosphate synthase small chain">
    <location>
        <begin position="1"/>
        <end position="357"/>
    </location>
</feature>
<feature type="domain" description="Glutamine amidotransferase type-1" evidence="1">
    <location>
        <begin position="172"/>
        <end position="357"/>
    </location>
</feature>
<feature type="region of interest" description="CPSase" evidence="1">
    <location>
        <begin position="1"/>
        <end position="168"/>
    </location>
</feature>
<feature type="active site" description="Nucleophile" evidence="1">
    <location>
        <position position="247"/>
    </location>
</feature>
<feature type="active site" evidence="1">
    <location>
        <position position="331"/>
    </location>
</feature>
<feature type="active site" evidence="1">
    <location>
        <position position="333"/>
    </location>
</feature>
<feature type="binding site" evidence="1">
    <location>
        <position position="46"/>
    </location>
    <ligand>
        <name>L-glutamine</name>
        <dbReference type="ChEBI" id="CHEBI:58359"/>
    </ligand>
</feature>
<feature type="binding site" evidence="1">
    <location>
        <position position="220"/>
    </location>
    <ligand>
        <name>L-glutamine</name>
        <dbReference type="ChEBI" id="CHEBI:58359"/>
    </ligand>
</feature>
<feature type="binding site" evidence="1">
    <location>
        <position position="222"/>
    </location>
    <ligand>
        <name>L-glutamine</name>
        <dbReference type="ChEBI" id="CHEBI:58359"/>
    </ligand>
</feature>
<feature type="binding site" evidence="1">
    <location>
        <position position="248"/>
    </location>
    <ligand>
        <name>L-glutamine</name>
        <dbReference type="ChEBI" id="CHEBI:58359"/>
    </ligand>
</feature>
<feature type="binding site" evidence="1">
    <location>
        <position position="251"/>
    </location>
    <ligand>
        <name>L-glutamine</name>
        <dbReference type="ChEBI" id="CHEBI:58359"/>
    </ligand>
</feature>
<feature type="binding site" evidence="1">
    <location>
        <position position="289"/>
    </location>
    <ligand>
        <name>L-glutamine</name>
        <dbReference type="ChEBI" id="CHEBI:58359"/>
    </ligand>
</feature>
<feature type="binding site" evidence="1">
    <location>
        <position position="291"/>
    </location>
    <ligand>
        <name>L-glutamine</name>
        <dbReference type="ChEBI" id="CHEBI:58359"/>
    </ligand>
</feature>
<feature type="binding site" evidence="1">
    <location>
        <position position="292"/>
    </location>
    <ligand>
        <name>L-glutamine</name>
        <dbReference type="ChEBI" id="CHEBI:58359"/>
    </ligand>
</feature>
<name>CARA_LACLA</name>
<proteinExistence type="inferred from homology"/>
<evidence type="ECO:0000255" key="1">
    <source>
        <dbReference type="HAMAP-Rule" id="MF_01209"/>
    </source>
</evidence>
<gene>
    <name evidence="1" type="primary">carA</name>
    <name type="ordered locus">LL1601</name>
    <name type="ORF">L43866</name>
</gene>
<sequence>MSKRLLILEDGTIFEGESLGANLDVTGELVFNTGMTGYQESITDQSYNGQILTFTYPIVGNYGVNRDDYESIHPTCKAVVVHEAACRPSNWRMQMSFDEFLKAKNIPGITGVDTRAITKIVREHGTMKASLVQARDEVEHQMSQLQATVLPTNQVETSSTTTAYPSPNTGRKVVVVDFGLKHSILRELSKRECNLTVVPYNTSAQEILEMEPDGVMLTNGPGDPTDVPEAIEMIKEIQGKIPIFGICLGHQLFSLANGAKTYKMKFGHRGFNHAVREIATGRIDFTSQNHGYAVSSENLPEDLMITHVEINDDSVEGVRHKHFPAFSVQFHPDAAPGPHDASYLFDDFMDLMDNFKK</sequence>